<dbReference type="EMBL" id="CP000260">
    <property type="protein sequence ID" value="ABF34930.1"/>
    <property type="molecule type" value="Genomic_DNA"/>
</dbReference>
<dbReference type="RefSeq" id="WP_002982194.1">
    <property type="nucleotide sequence ID" value="NZ_CVUH01000011.1"/>
</dbReference>
<dbReference type="SMR" id="Q1JEH9"/>
<dbReference type="KEGG" id="sph:MGAS10270_Spy1865"/>
<dbReference type="HOGENOM" id="CLU_162466_0_0_9"/>
<dbReference type="Proteomes" id="UP000002436">
    <property type="component" value="Chromosome"/>
</dbReference>
<dbReference type="HAMAP" id="MF_01507">
    <property type="entry name" value="UPF0297"/>
    <property type="match status" value="1"/>
</dbReference>
<dbReference type="InterPro" id="IPR009309">
    <property type="entry name" value="IreB"/>
</dbReference>
<dbReference type="NCBIfam" id="NF003997">
    <property type="entry name" value="PRK05473.1"/>
    <property type="match status" value="1"/>
</dbReference>
<dbReference type="PANTHER" id="PTHR40067">
    <property type="entry name" value="UPF0297 PROTEIN YRZL"/>
    <property type="match status" value="1"/>
</dbReference>
<dbReference type="PANTHER" id="PTHR40067:SF1">
    <property type="entry name" value="UPF0297 PROTEIN YRZL"/>
    <property type="match status" value="1"/>
</dbReference>
<dbReference type="Pfam" id="PF06135">
    <property type="entry name" value="IreB"/>
    <property type="match status" value="1"/>
</dbReference>
<dbReference type="PIRSF" id="PIRSF037258">
    <property type="entry name" value="DUF965_bac"/>
    <property type="match status" value="1"/>
</dbReference>
<protein>
    <recommendedName>
        <fullName evidence="1">UPF0297 protein MGAS10270_Spy1865</fullName>
    </recommendedName>
</protein>
<reference key="1">
    <citation type="journal article" date="2006" name="Proc. Natl. Acad. Sci. U.S.A.">
        <title>Molecular genetic anatomy of inter- and intraserotype variation in the human bacterial pathogen group A Streptococcus.</title>
        <authorList>
            <person name="Beres S.B."/>
            <person name="Richter E.W."/>
            <person name="Nagiec M.J."/>
            <person name="Sumby P."/>
            <person name="Porcella S.F."/>
            <person name="DeLeo F.R."/>
            <person name="Musser J.M."/>
        </authorList>
    </citation>
    <scope>NUCLEOTIDE SEQUENCE [LARGE SCALE GENOMIC DNA]</scope>
    <source>
        <strain>MGAS10270</strain>
    </source>
</reference>
<proteinExistence type="inferred from homology"/>
<comment type="similarity">
    <text evidence="1">Belongs to the UPF0297 family.</text>
</comment>
<feature type="chain" id="PRO_0000248029" description="UPF0297 protein MGAS10270_Spy1865">
    <location>
        <begin position="1"/>
        <end position="89"/>
    </location>
</feature>
<name>Y1865_STRPD</name>
<gene>
    <name type="ordered locus">MGAS10270_Spy1865</name>
</gene>
<accession>Q1JEH9</accession>
<evidence type="ECO:0000255" key="1">
    <source>
        <dbReference type="HAMAP-Rule" id="MF_01507"/>
    </source>
</evidence>
<organism>
    <name type="scientific">Streptococcus pyogenes serotype M2 (strain MGAS10270)</name>
    <dbReference type="NCBI Taxonomy" id="370552"/>
    <lineage>
        <taxon>Bacteria</taxon>
        <taxon>Bacillati</taxon>
        <taxon>Bacillota</taxon>
        <taxon>Bacilli</taxon>
        <taxon>Lactobacillales</taxon>
        <taxon>Streptococcaceae</taxon>
        <taxon>Streptococcus</taxon>
    </lineage>
</organism>
<sequence length="89" mass="10364">MGFTDETVRFKLDDGDKRQISETLTAVYHSLDEKGYNPINQIVGYVLSGDPAYVPRYNDARNQIRKYERDEIVEELVRYYLQGNGIDVK</sequence>